<accession>Q6B8P5</accession>
<comment type="function">
    <text evidence="1">Seems to be required for the assembly of the photosystem I complex.</text>
</comment>
<comment type="subcellular location">
    <subcellularLocation>
        <location evidence="1">Plastid</location>
        <location evidence="1">Chloroplast thylakoid membrane</location>
        <topology evidence="1">Multi-pass membrane protein</topology>
    </subcellularLocation>
</comment>
<comment type="similarity">
    <text evidence="1">Belongs to the Ycf4 family.</text>
</comment>
<reference key="1">
    <citation type="journal article" date="2004" name="J. Mol. Evol.">
        <title>Comparative analysis of the complete plastid genome sequence of the red alga Gracilaria tenuistipitata var. liui provides insights into the evolution of rhodoplasts and their relationship to other plastids.</title>
        <authorList>
            <person name="Hagopian J.C."/>
            <person name="Reis M."/>
            <person name="Kitajima J.P."/>
            <person name="Bhattacharya D."/>
            <person name="de Oliveira M.C."/>
        </authorList>
    </citation>
    <scope>NUCLEOTIDE SEQUENCE [LARGE SCALE GENOMIC DNA]</scope>
</reference>
<dbReference type="EMBL" id="AY673996">
    <property type="protein sequence ID" value="AAT79740.1"/>
    <property type="molecule type" value="Genomic_DNA"/>
</dbReference>
<dbReference type="RefSeq" id="YP_063665.1">
    <property type="nucleotide sequence ID" value="NC_006137.1"/>
</dbReference>
<dbReference type="GeneID" id="2944043"/>
<dbReference type="GO" id="GO:0009535">
    <property type="term" value="C:chloroplast thylakoid membrane"/>
    <property type="evidence" value="ECO:0007669"/>
    <property type="project" value="UniProtKB-SubCell"/>
</dbReference>
<dbReference type="GO" id="GO:0009522">
    <property type="term" value="C:photosystem I"/>
    <property type="evidence" value="ECO:0007669"/>
    <property type="project" value="InterPro"/>
</dbReference>
<dbReference type="GO" id="GO:0015979">
    <property type="term" value="P:photosynthesis"/>
    <property type="evidence" value="ECO:0007669"/>
    <property type="project" value="UniProtKB-UniRule"/>
</dbReference>
<dbReference type="HAMAP" id="MF_00437">
    <property type="entry name" value="Ycf4"/>
    <property type="match status" value="1"/>
</dbReference>
<dbReference type="InterPro" id="IPR003359">
    <property type="entry name" value="PSI_Ycf4_assembly"/>
</dbReference>
<dbReference type="NCBIfam" id="NF002712">
    <property type="entry name" value="PRK02542.1"/>
    <property type="match status" value="1"/>
</dbReference>
<dbReference type="PANTHER" id="PTHR33288">
    <property type="match status" value="1"/>
</dbReference>
<dbReference type="PANTHER" id="PTHR33288:SF4">
    <property type="entry name" value="PHOTOSYSTEM I ASSEMBLY PROTEIN YCF4"/>
    <property type="match status" value="1"/>
</dbReference>
<dbReference type="Pfam" id="PF02392">
    <property type="entry name" value="Ycf4"/>
    <property type="match status" value="1"/>
</dbReference>
<gene>
    <name evidence="1" type="primary">ycf4</name>
    <name type="ordered locus">Grc000159</name>
</gene>
<name>YCF4_GRATL</name>
<feature type="chain" id="PRO_0000217606" description="Photosystem I assembly protein Ycf4">
    <location>
        <begin position="1"/>
        <end position="184"/>
    </location>
</feature>
<feature type="transmembrane region" description="Helical" evidence="1">
    <location>
        <begin position="21"/>
        <end position="41"/>
    </location>
</feature>
<feature type="transmembrane region" description="Helical" evidence="1">
    <location>
        <begin position="63"/>
        <end position="83"/>
    </location>
</feature>
<sequence>MYTMAQIKTDKILGSRRISNYFWATIILLGGLSFFLVGLSSYLKIELLPFTKSTDLLFLPQGIIMTFYGTAAILISLFLWLTIIWNIGSGYNEFNRDIGLVTIYRLGFPGKNRLIKLRYKIHDIYSIKVQIQEGLTPKREIYLKTKDKREIPLTQVGQPMSLAQIEERAAFLAKFLGVILEGIR</sequence>
<geneLocation type="chloroplast"/>
<keyword id="KW-0150">Chloroplast</keyword>
<keyword id="KW-0472">Membrane</keyword>
<keyword id="KW-0602">Photosynthesis</keyword>
<keyword id="KW-0934">Plastid</keyword>
<keyword id="KW-0793">Thylakoid</keyword>
<keyword id="KW-0812">Transmembrane</keyword>
<keyword id="KW-1133">Transmembrane helix</keyword>
<organism>
    <name type="scientific">Gracilaria tenuistipitata var. liui</name>
    <name type="common">Red alga</name>
    <dbReference type="NCBI Taxonomy" id="285951"/>
    <lineage>
        <taxon>Eukaryota</taxon>
        <taxon>Rhodophyta</taxon>
        <taxon>Florideophyceae</taxon>
        <taxon>Rhodymeniophycidae</taxon>
        <taxon>Gracilariales</taxon>
        <taxon>Gracilariaceae</taxon>
        <taxon>Gracilaria</taxon>
        <taxon>Gracilaria tenuistipitata</taxon>
    </lineage>
</organism>
<proteinExistence type="inferred from homology"/>
<evidence type="ECO:0000255" key="1">
    <source>
        <dbReference type="HAMAP-Rule" id="MF_00437"/>
    </source>
</evidence>
<protein>
    <recommendedName>
        <fullName evidence="1">Photosystem I assembly protein Ycf4</fullName>
    </recommendedName>
</protein>